<gene>
    <name evidence="1" type="primary">ribH</name>
    <name type="ordered locus">Nham_1818</name>
</gene>
<reference key="1">
    <citation type="submission" date="2006-03" db="EMBL/GenBank/DDBJ databases">
        <title>Complete sequence of chromosome of Nitrobacter hamburgensis X14.</title>
        <authorList>
            <consortium name="US DOE Joint Genome Institute"/>
            <person name="Copeland A."/>
            <person name="Lucas S."/>
            <person name="Lapidus A."/>
            <person name="Barry K."/>
            <person name="Detter J.C."/>
            <person name="Glavina del Rio T."/>
            <person name="Hammon N."/>
            <person name="Israni S."/>
            <person name="Dalin E."/>
            <person name="Tice H."/>
            <person name="Pitluck S."/>
            <person name="Chain P."/>
            <person name="Malfatti S."/>
            <person name="Shin M."/>
            <person name="Vergez L."/>
            <person name="Schmutz J."/>
            <person name="Larimer F."/>
            <person name="Land M."/>
            <person name="Hauser L."/>
            <person name="Kyrpides N."/>
            <person name="Ivanova N."/>
            <person name="Ward B."/>
            <person name="Arp D."/>
            <person name="Klotz M."/>
            <person name="Stein L."/>
            <person name="O'Mullan G."/>
            <person name="Starkenburg S."/>
            <person name="Sayavedra L."/>
            <person name="Poret-Peterson A.T."/>
            <person name="Gentry M.E."/>
            <person name="Bruce D."/>
            <person name="Richardson P."/>
        </authorList>
    </citation>
    <scope>NUCLEOTIDE SEQUENCE [LARGE SCALE GENOMIC DNA]</scope>
    <source>
        <strain>DSM 10229 / NCIMB 13809 / X14</strain>
    </source>
</reference>
<protein>
    <recommendedName>
        <fullName evidence="1">6,7-dimethyl-8-ribityllumazine synthase</fullName>
        <shortName evidence="1">DMRL synthase</shortName>
        <shortName evidence="1">LS</shortName>
        <shortName evidence="1">Lumazine synthase</shortName>
        <ecNumber evidence="1">2.5.1.78</ecNumber>
    </recommendedName>
</protein>
<evidence type="ECO:0000255" key="1">
    <source>
        <dbReference type="HAMAP-Rule" id="MF_00178"/>
    </source>
</evidence>
<organism>
    <name type="scientific">Nitrobacter hamburgensis (strain DSM 10229 / NCIMB 13809 / X14)</name>
    <dbReference type="NCBI Taxonomy" id="323097"/>
    <lineage>
        <taxon>Bacteria</taxon>
        <taxon>Pseudomonadati</taxon>
        <taxon>Pseudomonadota</taxon>
        <taxon>Alphaproteobacteria</taxon>
        <taxon>Hyphomicrobiales</taxon>
        <taxon>Nitrobacteraceae</taxon>
        <taxon>Nitrobacter</taxon>
    </lineage>
</organism>
<proteinExistence type="inferred from homology"/>
<comment type="function">
    <text evidence="1">Catalyzes the formation of 6,7-dimethyl-8-ribityllumazine by condensation of 5-amino-6-(D-ribitylamino)uracil with 3,4-dihydroxy-2-butanone 4-phosphate. This is the penultimate step in the biosynthesis of riboflavin.</text>
</comment>
<comment type="catalytic activity">
    <reaction evidence="1">
        <text>(2S)-2-hydroxy-3-oxobutyl phosphate + 5-amino-6-(D-ribitylamino)uracil = 6,7-dimethyl-8-(1-D-ribityl)lumazine + phosphate + 2 H2O + H(+)</text>
        <dbReference type="Rhea" id="RHEA:26152"/>
        <dbReference type="ChEBI" id="CHEBI:15377"/>
        <dbReference type="ChEBI" id="CHEBI:15378"/>
        <dbReference type="ChEBI" id="CHEBI:15934"/>
        <dbReference type="ChEBI" id="CHEBI:43474"/>
        <dbReference type="ChEBI" id="CHEBI:58201"/>
        <dbReference type="ChEBI" id="CHEBI:58830"/>
        <dbReference type="EC" id="2.5.1.78"/>
    </reaction>
</comment>
<comment type="pathway">
    <text evidence="1">Cofactor biosynthesis; riboflavin biosynthesis; riboflavin from 2-hydroxy-3-oxobutyl phosphate and 5-amino-6-(D-ribitylamino)uracil: step 1/2.</text>
</comment>
<comment type="similarity">
    <text evidence="1">Belongs to the DMRL synthase family.</text>
</comment>
<dbReference type="EC" id="2.5.1.78" evidence="1"/>
<dbReference type="EMBL" id="CP000319">
    <property type="protein sequence ID" value="ABE62632.1"/>
    <property type="molecule type" value="Genomic_DNA"/>
</dbReference>
<dbReference type="RefSeq" id="WP_011510314.1">
    <property type="nucleotide sequence ID" value="NC_007964.1"/>
</dbReference>
<dbReference type="SMR" id="Q1QMB5"/>
<dbReference type="STRING" id="323097.Nham_1818"/>
<dbReference type="KEGG" id="nha:Nham_1818"/>
<dbReference type="eggNOG" id="COG0054">
    <property type="taxonomic scope" value="Bacteria"/>
</dbReference>
<dbReference type="HOGENOM" id="CLU_089358_1_2_5"/>
<dbReference type="OrthoDB" id="9809709at2"/>
<dbReference type="UniPathway" id="UPA00275">
    <property type="reaction ID" value="UER00404"/>
</dbReference>
<dbReference type="Proteomes" id="UP000001953">
    <property type="component" value="Chromosome"/>
</dbReference>
<dbReference type="GO" id="GO:0005829">
    <property type="term" value="C:cytosol"/>
    <property type="evidence" value="ECO:0007669"/>
    <property type="project" value="TreeGrafter"/>
</dbReference>
<dbReference type="GO" id="GO:0009349">
    <property type="term" value="C:riboflavin synthase complex"/>
    <property type="evidence" value="ECO:0007669"/>
    <property type="project" value="InterPro"/>
</dbReference>
<dbReference type="GO" id="GO:0000906">
    <property type="term" value="F:6,7-dimethyl-8-ribityllumazine synthase activity"/>
    <property type="evidence" value="ECO:0007669"/>
    <property type="project" value="UniProtKB-UniRule"/>
</dbReference>
<dbReference type="GO" id="GO:0009231">
    <property type="term" value="P:riboflavin biosynthetic process"/>
    <property type="evidence" value="ECO:0007669"/>
    <property type="project" value="UniProtKB-UniRule"/>
</dbReference>
<dbReference type="CDD" id="cd09209">
    <property type="entry name" value="Lumazine_synthase-I"/>
    <property type="match status" value="1"/>
</dbReference>
<dbReference type="Gene3D" id="3.40.50.960">
    <property type="entry name" value="Lumazine/riboflavin synthase"/>
    <property type="match status" value="1"/>
</dbReference>
<dbReference type="HAMAP" id="MF_00178">
    <property type="entry name" value="Lumazine_synth"/>
    <property type="match status" value="1"/>
</dbReference>
<dbReference type="InterPro" id="IPR034964">
    <property type="entry name" value="LS"/>
</dbReference>
<dbReference type="InterPro" id="IPR002180">
    <property type="entry name" value="LS/RS"/>
</dbReference>
<dbReference type="InterPro" id="IPR036467">
    <property type="entry name" value="LS/RS_sf"/>
</dbReference>
<dbReference type="NCBIfam" id="TIGR00114">
    <property type="entry name" value="lumazine-synth"/>
    <property type="match status" value="1"/>
</dbReference>
<dbReference type="PANTHER" id="PTHR21058:SF0">
    <property type="entry name" value="6,7-DIMETHYL-8-RIBITYLLUMAZINE SYNTHASE"/>
    <property type="match status" value="1"/>
</dbReference>
<dbReference type="PANTHER" id="PTHR21058">
    <property type="entry name" value="6,7-DIMETHYL-8-RIBITYLLUMAZINE SYNTHASE DMRL SYNTHASE LUMAZINE SYNTHASE"/>
    <property type="match status" value="1"/>
</dbReference>
<dbReference type="Pfam" id="PF00885">
    <property type="entry name" value="DMRL_synthase"/>
    <property type="match status" value="1"/>
</dbReference>
<dbReference type="SUPFAM" id="SSF52121">
    <property type="entry name" value="Lumazine synthase"/>
    <property type="match status" value="1"/>
</dbReference>
<name>RISB_NITHX</name>
<sequence length="163" mass="17243">MADARRAPLKDRTDVSGARALIVEARFYDDIQDALLEGAVAELSAAGVSYDVVTVPGALEIPAAIAIALDAAERSGKPYDAVVALGCVVRGDTIHFEIVSMESSRALMDLSVQRRVPLGNGIITVNTDAQAWARARASELNKGGDAARAALTMLRIKRRLAKA</sequence>
<keyword id="KW-1185">Reference proteome</keyword>
<keyword id="KW-0686">Riboflavin biosynthesis</keyword>
<keyword id="KW-0808">Transferase</keyword>
<feature type="chain" id="PRO_1000040464" description="6,7-dimethyl-8-ribityllumazine synthase">
    <location>
        <begin position="1"/>
        <end position="163"/>
    </location>
</feature>
<feature type="active site" description="Proton donor" evidence="1">
    <location>
        <position position="95"/>
    </location>
</feature>
<feature type="binding site" evidence="1">
    <location>
        <position position="27"/>
    </location>
    <ligand>
        <name>5-amino-6-(D-ribitylamino)uracil</name>
        <dbReference type="ChEBI" id="CHEBI:15934"/>
    </ligand>
</feature>
<feature type="binding site" evidence="1">
    <location>
        <begin position="58"/>
        <end position="60"/>
    </location>
    <ligand>
        <name>5-amino-6-(D-ribitylamino)uracil</name>
        <dbReference type="ChEBI" id="CHEBI:15934"/>
    </ligand>
</feature>
<feature type="binding site" evidence="1">
    <location>
        <begin position="87"/>
        <end position="89"/>
    </location>
    <ligand>
        <name>5-amino-6-(D-ribitylamino)uracil</name>
        <dbReference type="ChEBI" id="CHEBI:15934"/>
    </ligand>
</feature>
<feature type="binding site" evidence="1">
    <location>
        <begin position="92"/>
        <end position="93"/>
    </location>
    <ligand>
        <name>(2S)-2-hydroxy-3-oxobutyl phosphate</name>
        <dbReference type="ChEBI" id="CHEBI:58830"/>
    </ligand>
</feature>
<feature type="binding site" evidence="1">
    <location>
        <position position="120"/>
    </location>
    <ligand>
        <name>5-amino-6-(D-ribitylamino)uracil</name>
        <dbReference type="ChEBI" id="CHEBI:15934"/>
    </ligand>
</feature>
<feature type="binding site" evidence="1">
    <location>
        <position position="134"/>
    </location>
    <ligand>
        <name>(2S)-2-hydroxy-3-oxobutyl phosphate</name>
        <dbReference type="ChEBI" id="CHEBI:58830"/>
    </ligand>
</feature>
<accession>Q1QMB5</accession>